<keyword id="KW-1185">Reference proteome</keyword>
<keyword id="KW-0687">Ribonucleoprotein</keyword>
<keyword id="KW-0689">Ribosomal protein</keyword>
<feature type="chain" id="PRO_0000187458" description="Large ribosomal subunit protein bL34">
    <location>
        <begin position="1"/>
        <end position="44"/>
    </location>
</feature>
<feature type="region of interest" description="Disordered" evidence="2">
    <location>
        <begin position="25"/>
        <end position="44"/>
    </location>
</feature>
<feature type="compositionally biased region" description="Basic residues" evidence="2">
    <location>
        <begin position="26"/>
        <end position="38"/>
    </location>
</feature>
<dbReference type="EMBL" id="CP000031">
    <property type="protein sequence ID" value="AAV93855.1"/>
    <property type="status" value="ALT_INIT"/>
    <property type="molecule type" value="Genomic_DNA"/>
</dbReference>
<dbReference type="RefSeq" id="WP_008554144.1">
    <property type="nucleotide sequence ID" value="NC_003911.12"/>
</dbReference>
<dbReference type="SMR" id="Q5LW05"/>
<dbReference type="STRING" id="246200.SPO0538"/>
<dbReference type="PaxDb" id="246200-SPO0538"/>
<dbReference type="GeneID" id="78398296"/>
<dbReference type="KEGG" id="sil:SPO0538"/>
<dbReference type="eggNOG" id="COG0230">
    <property type="taxonomic scope" value="Bacteria"/>
</dbReference>
<dbReference type="HOGENOM" id="CLU_129938_2_0_5"/>
<dbReference type="OrthoDB" id="9804164at2"/>
<dbReference type="Proteomes" id="UP000001023">
    <property type="component" value="Chromosome"/>
</dbReference>
<dbReference type="GO" id="GO:1990904">
    <property type="term" value="C:ribonucleoprotein complex"/>
    <property type="evidence" value="ECO:0007669"/>
    <property type="project" value="UniProtKB-KW"/>
</dbReference>
<dbReference type="GO" id="GO:0005840">
    <property type="term" value="C:ribosome"/>
    <property type="evidence" value="ECO:0007669"/>
    <property type="project" value="UniProtKB-KW"/>
</dbReference>
<dbReference type="GO" id="GO:0003735">
    <property type="term" value="F:structural constituent of ribosome"/>
    <property type="evidence" value="ECO:0007669"/>
    <property type="project" value="InterPro"/>
</dbReference>
<dbReference type="GO" id="GO:0006412">
    <property type="term" value="P:translation"/>
    <property type="evidence" value="ECO:0007669"/>
    <property type="project" value="UniProtKB-UniRule"/>
</dbReference>
<dbReference type="FunFam" id="1.10.287.3980:FF:000001">
    <property type="entry name" value="Mitochondrial ribosomal protein L34"/>
    <property type="match status" value="1"/>
</dbReference>
<dbReference type="Gene3D" id="1.10.287.3980">
    <property type="match status" value="1"/>
</dbReference>
<dbReference type="HAMAP" id="MF_00391">
    <property type="entry name" value="Ribosomal_bL34"/>
    <property type="match status" value="1"/>
</dbReference>
<dbReference type="InterPro" id="IPR000271">
    <property type="entry name" value="Ribosomal_bL34"/>
</dbReference>
<dbReference type="InterPro" id="IPR020939">
    <property type="entry name" value="Ribosomal_bL34_CS"/>
</dbReference>
<dbReference type="NCBIfam" id="TIGR01030">
    <property type="entry name" value="rpmH_bact"/>
    <property type="match status" value="1"/>
</dbReference>
<dbReference type="PANTHER" id="PTHR14503:SF4">
    <property type="entry name" value="LARGE RIBOSOMAL SUBUNIT PROTEIN BL34M"/>
    <property type="match status" value="1"/>
</dbReference>
<dbReference type="PANTHER" id="PTHR14503">
    <property type="entry name" value="MITOCHONDRIAL RIBOSOMAL PROTEIN 34 FAMILY MEMBER"/>
    <property type="match status" value="1"/>
</dbReference>
<dbReference type="Pfam" id="PF00468">
    <property type="entry name" value="Ribosomal_L34"/>
    <property type="match status" value="1"/>
</dbReference>
<dbReference type="PROSITE" id="PS00784">
    <property type="entry name" value="RIBOSOMAL_L34"/>
    <property type="match status" value="1"/>
</dbReference>
<evidence type="ECO:0000255" key="1">
    <source>
        <dbReference type="HAMAP-Rule" id="MF_00391"/>
    </source>
</evidence>
<evidence type="ECO:0000256" key="2">
    <source>
        <dbReference type="SAM" id="MobiDB-lite"/>
    </source>
</evidence>
<evidence type="ECO:0000305" key="3"/>
<reference key="1">
    <citation type="journal article" date="2004" name="Nature">
        <title>Genome sequence of Silicibacter pomeroyi reveals adaptations to the marine environment.</title>
        <authorList>
            <person name="Moran M.A."/>
            <person name="Buchan A."/>
            <person name="Gonzalez J.M."/>
            <person name="Heidelberg J.F."/>
            <person name="Whitman W.B."/>
            <person name="Kiene R.P."/>
            <person name="Henriksen J.R."/>
            <person name="King G.M."/>
            <person name="Belas R."/>
            <person name="Fuqua C."/>
            <person name="Brinkac L.M."/>
            <person name="Lewis M."/>
            <person name="Johri S."/>
            <person name="Weaver B."/>
            <person name="Pai G."/>
            <person name="Eisen J.A."/>
            <person name="Rahe E."/>
            <person name="Sheldon W.M."/>
            <person name="Ye W."/>
            <person name="Miller T.R."/>
            <person name="Carlton J."/>
            <person name="Rasko D.A."/>
            <person name="Paulsen I.T."/>
            <person name="Ren Q."/>
            <person name="Daugherty S.C."/>
            <person name="DeBoy R.T."/>
            <person name="Dodson R.J."/>
            <person name="Durkin A.S."/>
            <person name="Madupu R."/>
            <person name="Nelson W.C."/>
            <person name="Sullivan S.A."/>
            <person name="Rosovitz M.J."/>
            <person name="Haft D.H."/>
            <person name="Selengut J."/>
            <person name="Ward N."/>
        </authorList>
    </citation>
    <scope>NUCLEOTIDE SEQUENCE [LARGE SCALE GENOMIC DNA]</scope>
    <source>
        <strain>ATCC 700808 / DSM 15171 / DSS-3</strain>
    </source>
</reference>
<reference key="2">
    <citation type="journal article" date="2014" name="Stand. Genomic Sci.">
        <title>An updated genome annotation for the model marine bacterium Ruegeria pomeroyi DSS-3.</title>
        <authorList>
            <person name="Rivers A.R."/>
            <person name="Smith C.B."/>
            <person name="Moran M.A."/>
        </authorList>
    </citation>
    <scope>GENOME REANNOTATION</scope>
    <source>
        <strain>ATCC 700808 / DSM 15171 / DSS-3</strain>
    </source>
</reference>
<accession>Q5LW05</accession>
<comment type="similarity">
    <text evidence="1">Belongs to the bacterial ribosomal protein bL34 family.</text>
</comment>
<comment type="sequence caution" evidence="3">
    <conflict type="erroneous initiation">
        <sequence resource="EMBL-CDS" id="AAV93855"/>
    </conflict>
</comment>
<sequence>MKRTYQPSNLVRKRRHGFRARMATKAGRKILNARRARGRKELSA</sequence>
<organism>
    <name type="scientific">Ruegeria pomeroyi (strain ATCC 700808 / DSM 15171 / DSS-3)</name>
    <name type="common">Silicibacter pomeroyi</name>
    <dbReference type="NCBI Taxonomy" id="246200"/>
    <lineage>
        <taxon>Bacteria</taxon>
        <taxon>Pseudomonadati</taxon>
        <taxon>Pseudomonadota</taxon>
        <taxon>Alphaproteobacteria</taxon>
        <taxon>Rhodobacterales</taxon>
        <taxon>Roseobacteraceae</taxon>
        <taxon>Ruegeria</taxon>
    </lineage>
</organism>
<gene>
    <name evidence="1" type="primary">rpmH</name>
    <name type="ordered locus">SPO0538</name>
</gene>
<proteinExistence type="inferred from homology"/>
<name>RL34_RUEPO</name>
<protein>
    <recommendedName>
        <fullName evidence="1">Large ribosomal subunit protein bL34</fullName>
    </recommendedName>
    <alternativeName>
        <fullName evidence="3">50S ribosomal protein L34</fullName>
    </alternativeName>
</protein>